<gene>
    <name type="primary">MT-CYB</name>
    <name type="synonym">COB</name>
    <name type="synonym">CYTB</name>
    <name type="synonym">MTCYB</name>
</gene>
<dbReference type="EMBL" id="AB126246">
    <property type="protein sequence ID" value="BAD95564.1"/>
    <property type="molecule type" value="Genomic_DNA"/>
</dbReference>
<dbReference type="EMBL" id="AB126247">
    <property type="protein sequence ID" value="BAD95565.1"/>
    <property type="molecule type" value="Genomic_DNA"/>
</dbReference>
<dbReference type="EMBL" id="AB126248">
    <property type="protein sequence ID" value="BAD95566.1"/>
    <property type="molecule type" value="Genomic_DNA"/>
</dbReference>
<dbReference type="EMBL" id="DQ093186">
    <property type="protein sequence ID" value="AAZ68027.1"/>
    <property type="molecule type" value="Genomic_DNA"/>
</dbReference>
<dbReference type="SMR" id="Q564P1"/>
<dbReference type="GO" id="GO:0005743">
    <property type="term" value="C:mitochondrial inner membrane"/>
    <property type="evidence" value="ECO:0007669"/>
    <property type="project" value="UniProtKB-SubCell"/>
</dbReference>
<dbReference type="GO" id="GO:0045275">
    <property type="term" value="C:respiratory chain complex III"/>
    <property type="evidence" value="ECO:0007669"/>
    <property type="project" value="InterPro"/>
</dbReference>
<dbReference type="GO" id="GO:0046872">
    <property type="term" value="F:metal ion binding"/>
    <property type="evidence" value="ECO:0007669"/>
    <property type="project" value="UniProtKB-KW"/>
</dbReference>
<dbReference type="GO" id="GO:0008121">
    <property type="term" value="F:ubiquinol-cytochrome-c reductase activity"/>
    <property type="evidence" value="ECO:0007669"/>
    <property type="project" value="InterPro"/>
</dbReference>
<dbReference type="GO" id="GO:0006122">
    <property type="term" value="P:mitochondrial electron transport, ubiquinol to cytochrome c"/>
    <property type="evidence" value="ECO:0007669"/>
    <property type="project" value="TreeGrafter"/>
</dbReference>
<dbReference type="CDD" id="cd00290">
    <property type="entry name" value="cytochrome_b_C"/>
    <property type="match status" value="1"/>
</dbReference>
<dbReference type="CDD" id="cd00284">
    <property type="entry name" value="Cytochrome_b_N"/>
    <property type="match status" value="1"/>
</dbReference>
<dbReference type="FunFam" id="1.20.810.10:FF:000002">
    <property type="entry name" value="Cytochrome b"/>
    <property type="match status" value="1"/>
</dbReference>
<dbReference type="Gene3D" id="1.20.810.10">
    <property type="entry name" value="Cytochrome Bc1 Complex, Chain C"/>
    <property type="match status" value="1"/>
</dbReference>
<dbReference type="InterPro" id="IPR005798">
    <property type="entry name" value="Cyt_b/b6_C"/>
</dbReference>
<dbReference type="InterPro" id="IPR036150">
    <property type="entry name" value="Cyt_b/b6_C_sf"/>
</dbReference>
<dbReference type="InterPro" id="IPR005797">
    <property type="entry name" value="Cyt_b/b6_N"/>
</dbReference>
<dbReference type="InterPro" id="IPR027387">
    <property type="entry name" value="Cytb/b6-like_sf"/>
</dbReference>
<dbReference type="InterPro" id="IPR030689">
    <property type="entry name" value="Cytochrome_b"/>
</dbReference>
<dbReference type="InterPro" id="IPR048260">
    <property type="entry name" value="Cytochrome_b_C_euk/bac"/>
</dbReference>
<dbReference type="InterPro" id="IPR048259">
    <property type="entry name" value="Cytochrome_b_N_euk/bac"/>
</dbReference>
<dbReference type="InterPro" id="IPR016174">
    <property type="entry name" value="Di-haem_cyt_TM"/>
</dbReference>
<dbReference type="PANTHER" id="PTHR19271">
    <property type="entry name" value="CYTOCHROME B"/>
    <property type="match status" value="1"/>
</dbReference>
<dbReference type="PANTHER" id="PTHR19271:SF16">
    <property type="entry name" value="CYTOCHROME B"/>
    <property type="match status" value="1"/>
</dbReference>
<dbReference type="Pfam" id="PF00032">
    <property type="entry name" value="Cytochrom_B_C"/>
    <property type="match status" value="1"/>
</dbReference>
<dbReference type="Pfam" id="PF00033">
    <property type="entry name" value="Cytochrome_B"/>
    <property type="match status" value="1"/>
</dbReference>
<dbReference type="PIRSF" id="PIRSF038885">
    <property type="entry name" value="COB"/>
    <property type="match status" value="1"/>
</dbReference>
<dbReference type="SUPFAM" id="SSF81648">
    <property type="entry name" value="a domain/subunit of cytochrome bc1 complex (Ubiquinol-cytochrome c reductase)"/>
    <property type="match status" value="1"/>
</dbReference>
<dbReference type="SUPFAM" id="SSF81342">
    <property type="entry name" value="Transmembrane di-heme cytochromes"/>
    <property type="match status" value="1"/>
</dbReference>
<dbReference type="PROSITE" id="PS51003">
    <property type="entry name" value="CYTB_CTER"/>
    <property type="match status" value="1"/>
</dbReference>
<dbReference type="PROSITE" id="PS51002">
    <property type="entry name" value="CYTB_NTER"/>
    <property type="match status" value="1"/>
</dbReference>
<accession>Q564P1</accession>
<accession>Q104Y4</accession>
<accession>Q564N9</accession>
<organism>
    <name type="scientific">Eoglaucomys fimbriatus</name>
    <name type="common">Small Kashmir flying squirrel</name>
    <name type="synonym">Hylopetes fimbriatus</name>
    <dbReference type="NCBI Taxonomy" id="226811"/>
    <lineage>
        <taxon>Eukaryota</taxon>
        <taxon>Metazoa</taxon>
        <taxon>Chordata</taxon>
        <taxon>Craniata</taxon>
        <taxon>Vertebrata</taxon>
        <taxon>Euteleostomi</taxon>
        <taxon>Mammalia</taxon>
        <taxon>Eutheria</taxon>
        <taxon>Euarchontoglires</taxon>
        <taxon>Glires</taxon>
        <taxon>Rodentia</taxon>
        <taxon>Sciuromorpha</taxon>
        <taxon>Sciuridae</taxon>
        <taxon>Sciurinae</taxon>
        <taxon>Pteromyini</taxon>
        <taxon>Eoglaucomys</taxon>
    </lineage>
</organism>
<geneLocation type="mitochondrion"/>
<keyword id="KW-0249">Electron transport</keyword>
<keyword id="KW-0349">Heme</keyword>
<keyword id="KW-0408">Iron</keyword>
<keyword id="KW-0472">Membrane</keyword>
<keyword id="KW-0479">Metal-binding</keyword>
<keyword id="KW-0496">Mitochondrion</keyword>
<keyword id="KW-0999">Mitochondrion inner membrane</keyword>
<keyword id="KW-0679">Respiratory chain</keyword>
<keyword id="KW-0812">Transmembrane</keyword>
<keyword id="KW-1133">Transmembrane helix</keyword>
<keyword id="KW-0813">Transport</keyword>
<keyword id="KW-0830">Ubiquinone</keyword>
<reference key="1">
    <citation type="journal article" date="2004" name="Can. J. Zool.">
        <title>Phylogenetic position of the Kashmir flying squirrel, Hylopetes fimbriatus (=Eoglaucomys fimbriatus), in the subfamily Pteromyinae.</title>
        <authorList>
            <person name="Oshida T."/>
            <person name="Shafique C.M."/>
            <person name="Barkati S."/>
            <person name="Yasuda M."/>
            <person name="Hussein N.A."/>
            <person name="Endo H."/>
            <person name="Yanagawa H."/>
            <person name="Masuda R."/>
        </authorList>
    </citation>
    <scope>NUCLEOTIDE SEQUENCE [GENOMIC DNA]</scope>
    <source>
        <strain>Isolate SP801</strain>
        <strain>Isolate SP802</strain>
        <strain>Isolate SP805</strain>
    </source>
</reference>
<reference key="2">
    <citation type="submission" date="2005-06" db="EMBL/GenBank/DDBJ databases">
        <title>Phylogeny and biogeography of Eoglaucomys and Hylopetes (Rodentia: Sciuridae), inferred from molecular and morphometric analyses.</title>
        <authorList>
            <person name="Yu F."/>
            <person name="Pang J."/>
            <person name="Kilpatrick W.C."/>
            <person name="McGuire P.M."/>
            <person name="Wang Y."/>
            <person name="Woods C.A."/>
        </authorList>
    </citation>
    <scope>NUCLEOTIDE SEQUENCE [GENOMIC DNA]</scope>
    <source>
        <tissue>Skin</tissue>
    </source>
</reference>
<proteinExistence type="inferred from homology"/>
<feature type="chain" id="PRO_0000257902" description="Cytochrome b">
    <location>
        <begin position="1"/>
        <end position="379"/>
    </location>
</feature>
<feature type="transmembrane region" description="Helical" evidence="2">
    <location>
        <begin position="33"/>
        <end position="53"/>
    </location>
</feature>
<feature type="transmembrane region" description="Helical" evidence="2">
    <location>
        <begin position="77"/>
        <end position="98"/>
    </location>
</feature>
<feature type="transmembrane region" description="Helical" evidence="2">
    <location>
        <begin position="113"/>
        <end position="133"/>
    </location>
</feature>
<feature type="transmembrane region" description="Helical" evidence="2">
    <location>
        <begin position="178"/>
        <end position="198"/>
    </location>
</feature>
<feature type="transmembrane region" description="Helical" evidence="2">
    <location>
        <begin position="226"/>
        <end position="246"/>
    </location>
</feature>
<feature type="transmembrane region" description="Helical" evidence="2">
    <location>
        <begin position="288"/>
        <end position="308"/>
    </location>
</feature>
<feature type="transmembrane region" description="Helical" evidence="2">
    <location>
        <begin position="320"/>
        <end position="340"/>
    </location>
</feature>
<feature type="transmembrane region" description="Helical" evidence="2">
    <location>
        <begin position="347"/>
        <end position="367"/>
    </location>
</feature>
<feature type="binding site" description="axial binding residue" evidence="2">
    <location>
        <position position="83"/>
    </location>
    <ligand>
        <name>heme b</name>
        <dbReference type="ChEBI" id="CHEBI:60344"/>
        <label>b562</label>
    </ligand>
    <ligandPart>
        <name>Fe</name>
        <dbReference type="ChEBI" id="CHEBI:18248"/>
    </ligandPart>
</feature>
<feature type="binding site" description="axial binding residue" evidence="2">
    <location>
        <position position="97"/>
    </location>
    <ligand>
        <name>heme b</name>
        <dbReference type="ChEBI" id="CHEBI:60344"/>
        <label>b566</label>
    </ligand>
    <ligandPart>
        <name>Fe</name>
        <dbReference type="ChEBI" id="CHEBI:18248"/>
    </ligandPart>
</feature>
<feature type="binding site" description="axial binding residue" evidence="2">
    <location>
        <position position="182"/>
    </location>
    <ligand>
        <name>heme b</name>
        <dbReference type="ChEBI" id="CHEBI:60344"/>
        <label>b562</label>
    </ligand>
    <ligandPart>
        <name>Fe</name>
        <dbReference type="ChEBI" id="CHEBI:18248"/>
    </ligandPart>
</feature>
<feature type="binding site" description="axial binding residue" evidence="2">
    <location>
        <position position="196"/>
    </location>
    <ligand>
        <name>heme b</name>
        <dbReference type="ChEBI" id="CHEBI:60344"/>
        <label>b566</label>
    </ligand>
    <ligandPart>
        <name>Fe</name>
        <dbReference type="ChEBI" id="CHEBI:18248"/>
    </ligandPart>
</feature>
<feature type="binding site" evidence="2">
    <location>
        <position position="201"/>
    </location>
    <ligand>
        <name>a ubiquinone</name>
        <dbReference type="ChEBI" id="CHEBI:16389"/>
    </ligand>
</feature>
<feature type="sequence variant" description="In strain: Isolate SP802 and Isolate SP805.">
    <original>L</original>
    <variation>P</variation>
    <location>
        <position position="253"/>
    </location>
</feature>
<feature type="sequence conflict" description="In Ref. 2; AAZ68027." evidence="5" ref="2">
    <original>M</original>
    <variation>I</variation>
    <location>
        <position position="350"/>
    </location>
</feature>
<evidence type="ECO:0000250" key="1"/>
<evidence type="ECO:0000250" key="2">
    <source>
        <dbReference type="UniProtKB" id="P00157"/>
    </source>
</evidence>
<evidence type="ECO:0000255" key="3">
    <source>
        <dbReference type="PROSITE-ProRule" id="PRU00967"/>
    </source>
</evidence>
<evidence type="ECO:0000255" key="4">
    <source>
        <dbReference type="PROSITE-ProRule" id="PRU00968"/>
    </source>
</evidence>
<evidence type="ECO:0000305" key="5"/>
<sequence>MTNIRKTHPLIKIVNSSFIDLPTPSNISAWWNFGSLLGLCLIIQIVTGLFLAMHYTSDTMTAFSSVTHICRDVNYGWLIRYMHANGASMFFICLFLHVGRGLYYGSYTYFETWNIGVILLFAVMATAFMGYVLPWGQMSFWGATVITNLLSAIPYIGTTLVEWIWGGFSVDKATLTRFFAFHFILPFIIAALAMVHLLFLHETGSNNPSGLISDSDKIPFHPYFSIKDILGFLILIMLFMTLVLFTPDLLGDLDNYTPANPLNTPPHIKPEWYFLFAYAILRSIPNKLGGVLALVFSILILMLFPILHMAKQRSMMFRPLSQCIFWILVADLFTLTWIGGQPVEYPFIIMGQMASILYFTIILIIFPSISLLENKLLKW</sequence>
<comment type="function">
    <text evidence="2">Component of the ubiquinol-cytochrome c reductase complex (complex III or cytochrome b-c1 complex) that is part of the mitochondrial respiratory chain. The b-c1 complex mediates electron transfer from ubiquinol to cytochrome c. Contributes to the generation of a proton gradient across the mitochondrial membrane that is then used for ATP synthesis.</text>
</comment>
<comment type="cofactor">
    <cofactor evidence="2">
        <name>heme b</name>
        <dbReference type="ChEBI" id="CHEBI:60344"/>
    </cofactor>
    <text evidence="2">Binds 2 heme b groups non-covalently.</text>
</comment>
<comment type="subunit">
    <text evidence="2">The cytochrome bc1 complex contains 11 subunits: 3 respiratory subunits (MT-CYB, CYC1 and UQCRFS1), 2 core proteins (UQCRC1 and UQCRC2) and 6 low-molecular weight proteins (UQCRH/QCR6, UQCRB/QCR7, UQCRQ/QCR8, UQCR10/QCR9, UQCR11/QCR10 and a cleavage product of UQCRFS1). This cytochrome bc1 complex then forms a dimer.</text>
</comment>
<comment type="subcellular location">
    <subcellularLocation>
        <location evidence="2">Mitochondrion inner membrane</location>
        <topology evidence="2">Multi-pass membrane protein</topology>
    </subcellularLocation>
</comment>
<comment type="miscellaneous">
    <text evidence="1">Heme 1 (or BL or b562) is low-potential and absorbs at about 562 nm, and heme 2 (or BH or b566) is high-potential and absorbs at about 566 nm.</text>
</comment>
<comment type="similarity">
    <text evidence="3 4">Belongs to the cytochrome b family.</text>
</comment>
<comment type="caution">
    <text evidence="2">The full-length protein contains only eight transmembrane helices, not nine as predicted by bioinformatics tools.</text>
</comment>
<protein>
    <recommendedName>
        <fullName>Cytochrome b</fullName>
    </recommendedName>
    <alternativeName>
        <fullName>Complex III subunit 3</fullName>
    </alternativeName>
    <alternativeName>
        <fullName>Complex III subunit III</fullName>
    </alternativeName>
    <alternativeName>
        <fullName>Cytochrome b-c1 complex subunit 3</fullName>
    </alternativeName>
    <alternativeName>
        <fullName>Ubiquinol-cytochrome-c reductase complex cytochrome b subunit</fullName>
    </alternativeName>
</protein>
<name>CYB_EOGFI</name>